<gene>
    <name evidence="5" type="primary">sox14</name>
    <name type="ORF">zgc:123197</name>
</gene>
<reference evidence="4" key="1">
    <citation type="submission" date="2005-10" db="EMBL/GenBank/DDBJ databases">
        <authorList>
            <consortium name="NIH - Zebrafish Gene Collection (ZGC) project"/>
        </authorList>
    </citation>
    <scope>NUCLEOTIDE SEQUENCE [LARGE SCALE MRNA]</scope>
    <source>
        <tissue evidence="4">Brain</tissue>
    </source>
</reference>
<dbReference type="EMBL" id="BC108033">
    <property type="protein sequence ID" value="AAI08034.1"/>
    <property type="molecule type" value="mRNA"/>
</dbReference>
<dbReference type="RefSeq" id="NP_001032769.1">
    <property type="nucleotide sequence ID" value="NM_001037680.2"/>
</dbReference>
<dbReference type="SMR" id="Q32PP9"/>
<dbReference type="FunCoup" id="Q32PP9">
    <property type="interactions" value="3"/>
</dbReference>
<dbReference type="STRING" id="7955.ENSDARP00000095305"/>
<dbReference type="PaxDb" id="7955-ENSDARP00000095305"/>
<dbReference type="Ensembl" id="ENSDART00000104532">
    <property type="protein sequence ID" value="ENSDARP00000095305"/>
    <property type="gene ID" value="ENSDARG00000070929"/>
</dbReference>
<dbReference type="GeneID" id="557661"/>
<dbReference type="KEGG" id="dre:557661"/>
<dbReference type="AGR" id="ZFIN:ZDB-GENE-051113-268"/>
<dbReference type="CTD" id="8403"/>
<dbReference type="ZFIN" id="ZDB-GENE-051113-268">
    <property type="gene designation" value="sox14"/>
</dbReference>
<dbReference type="eggNOG" id="KOG0527">
    <property type="taxonomic scope" value="Eukaryota"/>
</dbReference>
<dbReference type="HOGENOM" id="CLU_021123_3_1_1"/>
<dbReference type="InParanoid" id="Q32PP9"/>
<dbReference type="OMA" id="KMTQEMP"/>
<dbReference type="OrthoDB" id="6247875at2759"/>
<dbReference type="PhylomeDB" id="Q32PP9"/>
<dbReference type="TreeFam" id="TF351735"/>
<dbReference type="PRO" id="PR:Q32PP9"/>
<dbReference type="Proteomes" id="UP000000437">
    <property type="component" value="Chromosome 6"/>
</dbReference>
<dbReference type="Bgee" id="ENSDARG00000070929">
    <property type="expression patterns" value="Expressed in brain and 8 other cell types or tissues"/>
</dbReference>
<dbReference type="GO" id="GO:0005634">
    <property type="term" value="C:nucleus"/>
    <property type="evidence" value="ECO:0000318"/>
    <property type="project" value="GO_Central"/>
</dbReference>
<dbReference type="GO" id="GO:0001228">
    <property type="term" value="F:DNA-binding transcription activator activity, RNA polymerase II-specific"/>
    <property type="evidence" value="ECO:0000318"/>
    <property type="project" value="GO_Central"/>
</dbReference>
<dbReference type="GO" id="GO:0000978">
    <property type="term" value="F:RNA polymerase II cis-regulatory region sequence-specific DNA binding"/>
    <property type="evidence" value="ECO:0000318"/>
    <property type="project" value="GO_Central"/>
</dbReference>
<dbReference type="GO" id="GO:0007420">
    <property type="term" value="P:brain development"/>
    <property type="evidence" value="ECO:0000318"/>
    <property type="project" value="GO_Central"/>
</dbReference>
<dbReference type="GO" id="GO:0021854">
    <property type="term" value="P:hypothalamus development"/>
    <property type="evidence" value="ECO:0000315"/>
    <property type="project" value="ZFIN"/>
</dbReference>
<dbReference type="GO" id="GO:0000122">
    <property type="term" value="P:negative regulation of transcription by RNA polymerase II"/>
    <property type="evidence" value="ECO:0000318"/>
    <property type="project" value="GO_Central"/>
</dbReference>
<dbReference type="GO" id="GO:0030182">
    <property type="term" value="P:neuron differentiation"/>
    <property type="evidence" value="ECO:0000318"/>
    <property type="project" value="GO_Central"/>
</dbReference>
<dbReference type="GO" id="GO:0045944">
    <property type="term" value="P:positive regulation of transcription by RNA polymerase II"/>
    <property type="evidence" value="ECO:0000318"/>
    <property type="project" value="GO_Central"/>
</dbReference>
<dbReference type="CDD" id="cd01388">
    <property type="entry name" value="HMG-box_SoxB"/>
    <property type="match status" value="1"/>
</dbReference>
<dbReference type="FunFam" id="1.10.30.10:FF:000002">
    <property type="entry name" value="transcription factor Sox-2"/>
    <property type="match status" value="1"/>
</dbReference>
<dbReference type="Gene3D" id="1.10.30.10">
    <property type="entry name" value="High mobility group box domain"/>
    <property type="match status" value="1"/>
</dbReference>
<dbReference type="InterPro" id="IPR009071">
    <property type="entry name" value="HMG_box_dom"/>
</dbReference>
<dbReference type="InterPro" id="IPR036910">
    <property type="entry name" value="HMG_box_dom_sf"/>
</dbReference>
<dbReference type="InterPro" id="IPR022097">
    <property type="entry name" value="SOX_fam"/>
</dbReference>
<dbReference type="InterPro" id="IPR050140">
    <property type="entry name" value="SRY-related_HMG-box_TF-like"/>
</dbReference>
<dbReference type="PANTHER" id="PTHR10270">
    <property type="entry name" value="SOX TRANSCRIPTION FACTOR"/>
    <property type="match status" value="1"/>
</dbReference>
<dbReference type="PANTHER" id="PTHR10270:SF107">
    <property type="entry name" value="TRANSCRIPTION FACTOR SOX-14"/>
    <property type="match status" value="1"/>
</dbReference>
<dbReference type="Pfam" id="PF00505">
    <property type="entry name" value="HMG_box"/>
    <property type="match status" value="1"/>
</dbReference>
<dbReference type="Pfam" id="PF12336">
    <property type="entry name" value="SOXp"/>
    <property type="match status" value="1"/>
</dbReference>
<dbReference type="SMART" id="SM00398">
    <property type="entry name" value="HMG"/>
    <property type="match status" value="1"/>
</dbReference>
<dbReference type="SUPFAM" id="SSF47095">
    <property type="entry name" value="HMG-box"/>
    <property type="match status" value="1"/>
</dbReference>
<dbReference type="PROSITE" id="PS50118">
    <property type="entry name" value="HMG_BOX_2"/>
    <property type="match status" value="1"/>
</dbReference>
<keyword id="KW-0217">Developmental protein</keyword>
<keyword id="KW-0238">DNA-binding</keyword>
<keyword id="KW-0539">Nucleus</keyword>
<keyword id="KW-1185">Reference proteome</keyword>
<keyword id="KW-0678">Repressor</keyword>
<keyword id="KW-0804">Transcription</keyword>
<keyword id="KW-0805">Transcription regulation</keyword>
<protein>
    <recommendedName>
        <fullName evidence="2">Transcription factor Sox-14</fullName>
    </recommendedName>
</protein>
<accession>Q32PP9</accession>
<sequence>MSKPADHIKRPMNAFMVWSRGQRRKMAQENPKMHNSEISKRLGAEWKLLSESEKRPYIDEAKRLRAQHMKEHPDYKYRPRRKPKNLLKKDRYVFPLPYLGDTDHLKGLPVSATDSLLGSSEKARAFLPPTSAPYSFLDPSQFSSSAIQKMTEMPHTLATSTLPYASSLGYQNGAFGSLGCPSQHTHTHPSPTNPGYVVPCNCTAWSASSLQPPVAYILFPGMTKSGIDPYSSAHAAAM</sequence>
<name>SOX14_DANRE</name>
<comment type="function">
    <text evidence="1 2">Acts as a negative regulator of transcription. May function as a switch in neuronal development (By similarity).</text>
</comment>
<comment type="subcellular location">
    <subcellularLocation>
        <location evidence="2 3">Nucleus</location>
    </subcellularLocation>
</comment>
<feature type="chain" id="PRO_0000378068" description="Transcription factor Sox-14">
    <location>
        <begin position="1"/>
        <end position="238"/>
    </location>
</feature>
<feature type="DNA-binding region" description="HMG box" evidence="3">
    <location>
        <begin position="8"/>
        <end position="76"/>
    </location>
</feature>
<organism>
    <name type="scientific">Danio rerio</name>
    <name type="common">Zebrafish</name>
    <name type="synonym">Brachydanio rerio</name>
    <dbReference type="NCBI Taxonomy" id="7955"/>
    <lineage>
        <taxon>Eukaryota</taxon>
        <taxon>Metazoa</taxon>
        <taxon>Chordata</taxon>
        <taxon>Craniata</taxon>
        <taxon>Vertebrata</taxon>
        <taxon>Euteleostomi</taxon>
        <taxon>Actinopterygii</taxon>
        <taxon>Neopterygii</taxon>
        <taxon>Teleostei</taxon>
        <taxon>Ostariophysi</taxon>
        <taxon>Cypriniformes</taxon>
        <taxon>Danionidae</taxon>
        <taxon>Danioninae</taxon>
        <taxon>Danio</taxon>
    </lineage>
</organism>
<evidence type="ECO:0000250" key="1">
    <source>
        <dbReference type="UniProtKB" id="B0ZTE2"/>
    </source>
</evidence>
<evidence type="ECO:0000250" key="2">
    <source>
        <dbReference type="UniProtKB" id="Q9W7R6"/>
    </source>
</evidence>
<evidence type="ECO:0000255" key="3">
    <source>
        <dbReference type="PROSITE-ProRule" id="PRU00267"/>
    </source>
</evidence>
<evidence type="ECO:0000312" key="4">
    <source>
        <dbReference type="EMBL" id="AAI08034.1"/>
    </source>
</evidence>
<evidence type="ECO:0000312" key="5">
    <source>
        <dbReference type="ZFIN" id="ZDB-GENE-051113-268"/>
    </source>
</evidence>
<proteinExistence type="evidence at transcript level"/>